<sequence length="141" mass="15336">MAIERTLSIIKPDAVAKNVIGQIYSRFEGAGLKIVASRMAHLSRADAEKFYAVHAARPFFKDLVDFMISGPVMIQVLEGEGAILKNRDLMGATDPKKAEKGTIRADFADSIDANAVHGSDAAETAAVEIAFFFPEMNVYSR</sequence>
<comment type="function">
    <text evidence="1">Major role in the synthesis of nucleoside triphosphates other than ATP. The ATP gamma phosphate is transferred to the NDP beta phosphate via a ping-pong mechanism, using a phosphorylated active-site intermediate.</text>
</comment>
<comment type="catalytic activity">
    <reaction evidence="1">
        <text>a 2'-deoxyribonucleoside 5'-diphosphate + ATP = a 2'-deoxyribonucleoside 5'-triphosphate + ADP</text>
        <dbReference type="Rhea" id="RHEA:44640"/>
        <dbReference type="ChEBI" id="CHEBI:30616"/>
        <dbReference type="ChEBI" id="CHEBI:61560"/>
        <dbReference type="ChEBI" id="CHEBI:73316"/>
        <dbReference type="ChEBI" id="CHEBI:456216"/>
        <dbReference type="EC" id="2.7.4.6"/>
    </reaction>
</comment>
<comment type="catalytic activity">
    <reaction evidence="1">
        <text>a ribonucleoside 5'-diphosphate + ATP = a ribonucleoside 5'-triphosphate + ADP</text>
        <dbReference type="Rhea" id="RHEA:18113"/>
        <dbReference type="ChEBI" id="CHEBI:30616"/>
        <dbReference type="ChEBI" id="CHEBI:57930"/>
        <dbReference type="ChEBI" id="CHEBI:61557"/>
        <dbReference type="ChEBI" id="CHEBI:456216"/>
        <dbReference type="EC" id="2.7.4.6"/>
    </reaction>
</comment>
<comment type="cofactor">
    <cofactor evidence="1">
        <name>Mg(2+)</name>
        <dbReference type="ChEBI" id="CHEBI:18420"/>
    </cofactor>
</comment>
<comment type="subunit">
    <text evidence="1">Homotetramer.</text>
</comment>
<comment type="subcellular location">
    <subcellularLocation>
        <location evidence="1">Cytoplasm</location>
    </subcellularLocation>
</comment>
<comment type="similarity">
    <text evidence="1">Belongs to the NDK family.</text>
</comment>
<dbReference type="EC" id="2.7.4.6" evidence="1"/>
<dbReference type="EMBL" id="CP000958">
    <property type="protein sequence ID" value="ACA91000.1"/>
    <property type="molecule type" value="Genomic_DNA"/>
</dbReference>
<dbReference type="RefSeq" id="WP_006478674.1">
    <property type="nucleotide sequence ID" value="NC_010508.1"/>
</dbReference>
<dbReference type="SMR" id="B1JT95"/>
<dbReference type="GeneID" id="93191833"/>
<dbReference type="KEGG" id="bcm:Bcenmc03_1839"/>
<dbReference type="HOGENOM" id="CLU_060216_8_1_4"/>
<dbReference type="Proteomes" id="UP000002169">
    <property type="component" value="Chromosome 1"/>
</dbReference>
<dbReference type="GO" id="GO:0005737">
    <property type="term" value="C:cytoplasm"/>
    <property type="evidence" value="ECO:0007669"/>
    <property type="project" value="UniProtKB-SubCell"/>
</dbReference>
<dbReference type="GO" id="GO:0005524">
    <property type="term" value="F:ATP binding"/>
    <property type="evidence" value="ECO:0007669"/>
    <property type="project" value="UniProtKB-UniRule"/>
</dbReference>
<dbReference type="GO" id="GO:0046872">
    <property type="term" value="F:metal ion binding"/>
    <property type="evidence" value="ECO:0007669"/>
    <property type="project" value="UniProtKB-KW"/>
</dbReference>
<dbReference type="GO" id="GO:0004550">
    <property type="term" value="F:nucleoside diphosphate kinase activity"/>
    <property type="evidence" value="ECO:0007669"/>
    <property type="project" value="UniProtKB-UniRule"/>
</dbReference>
<dbReference type="GO" id="GO:0006241">
    <property type="term" value="P:CTP biosynthetic process"/>
    <property type="evidence" value="ECO:0007669"/>
    <property type="project" value="UniProtKB-UniRule"/>
</dbReference>
<dbReference type="GO" id="GO:0006183">
    <property type="term" value="P:GTP biosynthetic process"/>
    <property type="evidence" value="ECO:0007669"/>
    <property type="project" value="UniProtKB-UniRule"/>
</dbReference>
<dbReference type="GO" id="GO:0006228">
    <property type="term" value="P:UTP biosynthetic process"/>
    <property type="evidence" value="ECO:0007669"/>
    <property type="project" value="UniProtKB-UniRule"/>
</dbReference>
<dbReference type="CDD" id="cd04413">
    <property type="entry name" value="NDPk_I"/>
    <property type="match status" value="1"/>
</dbReference>
<dbReference type="FunFam" id="3.30.70.141:FF:000001">
    <property type="entry name" value="Nucleoside diphosphate kinase"/>
    <property type="match status" value="1"/>
</dbReference>
<dbReference type="Gene3D" id="3.30.70.141">
    <property type="entry name" value="Nucleoside diphosphate kinase-like domain"/>
    <property type="match status" value="1"/>
</dbReference>
<dbReference type="HAMAP" id="MF_00451">
    <property type="entry name" value="NDP_kinase"/>
    <property type="match status" value="1"/>
</dbReference>
<dbReference type="InterPro" id="IPR034907">
    <property type="entry name" value="NDK-like_dom"/>
</dbReference>
<dbReference type="InterPro" id="IPR036850">
    <property type="entry name" value="NDK-like_dom_sf"/>
</dbReference>
<dbReference type="InterPro" id="IPR001564">
    <property type="entry name" value="Nucleoside_diP_kinase"/>
</dbReference>
<dbReference type="NCBIfam" id="NF001908">
    <property type="entry name" value="PRK00668.1"/>
    <property type="match status" value="1"/>
</dbReference>
<dbReference type="PANTHER" id="PTHR46161">
    <property type="entry name" value="NUCLEOSIDE DIPHOSPHATE KINASE"/>
    <property type="match status" value="1"/>
</dbReference>
<dbReference type="PANTHER" id="PTHR46161:SF3">
    <property type="entry name" value="NUCLEOSIDE DIPHOSPHATE KINASE DDB_G0292928-RELATED"/>
    <property type="match status" value="1"/>
</dbReference>
<dbReference type="Pfam" id="PF00334">
    <property type="entry name" value="NDK"/>
    <property type="match status" value="1"/>
</dbReference>
<dbReference type="PRINTS" id="PR01243">
    <property type="entry name" value="NUCDPKINASE"/>
</dbReference>
<dbReference type="SMART" id="SM00562">
    <property type="entry name" value="NDK"/>
    <property type="match status" value="1"/>
</dbReference>
<dbReference type="SUPFAM" id="SSF54919">
    <property type="entry name" value="Nucleoside diphosphate kinase, NDK"/>
    <property type="match status" value="1"/>
</dbReference>
<dbReference type="PROSITE" id="PS51374">
    <property type="entry name" value="NDPK_LIKE"/>
    <property type="match status" value="1"/>
</dbReference>
<keyword id="KW-0067">ATP-binding</keyword>
<keyword id="KW-0963">Cytoplasm</keyword>
<keyword id="KW-0418">Kinase</keyword>
<keyword id="KW-0460">Magnesium</keyword>
<keyword id="KW-0479">Metal-binding</keyword>
<keyword id="KW-0546">Nucleotide metabolism</keyword>
<keyword id="KW-0547">Nucleotide-binding</keyword>
<keyword id="KW-0597">Phosphoprotein</keyword>
<keyword id="KW-0808">Transferase</keyword>
<feature type="chain" id="PRO_1000124937" description="Nucleoside diphosphate kinase">
    <location>
        <begin position="1"/>
        <end position="141"/>
    </location>
</feature>
<feature type="active site" description="Pros-phosphohistidine intermediate" evidence="1">
    <location>
        <position position="117"/>
    </location>
</feature>
<feature type="binding site" evidence="1">
    <location>
        <position position="11"/>
    </location>
    <ligand>
        <name>ATP</name>
        <dbReference type="ChEBI" id="CHEBI:30616"/>
    </ligand>
</feature>
<feature type="binding site" evidence="1">
    <location>
        <position position="59"/>
    </location>
    <ligand>
        <name>ATP</name>
        <dbReference type="ChEBI" id="CHEBI:30616"/>
    </ligand>
</feature>
<feature type="binding site" evidence="1">
    <location>
        <position position="87"/>
    </location>
    <ligand>
        <name>ATP</name>
        <dbReference type="ChEBI" id="CHEBI:30616"/>
    </ligand>
</feature>
<feature type="binding site" evidence="1">
    <location>
        <position position="93"/>
    </location>
    <ligand>
        <name>ATP</name>
        <dbReference type="ChEBI" id="CHEBI:30616"/>
    </ligand>
</feature>
<feature type="binding site" evidence="1">
    <location>
        <position position="104"/>
    </location>
    <ligand>
        <name>ATP</name>
        <dbReference type="ChEBI" id="CHEBI:30616"/>
    </ligand>
</feature>
<feature type="binding site" evidence="1">
    <location>
        <position position="114"/>
    </location>
    <ligand>
        <name>ATP</name>
        <dbReference type="ChEBI" id="CHEBI:30616"/>
    </ligand>
</feature>
<accession>B1JT95</accession>
<organism>
    <name type="scientific">Burkholderia orbicola (strain MC0-3)</name>
    <dbReference type="NCBI Taxonomy" id="406425"/>
    <lineage>
        <taxon>Bacteria</taxon>
        <taxon>Pseudomonadati</taxon>
        <taxon>Pseudomonadota</taxon>
        <taxon>Betaproteobacteria</taxon>
        <taxon>Burkholderiales</taxon>
        <taxon>Burkholderiaceae</taxon>
        <taxon>Burkholderia</taxon>
        <taxon>Burkholderia cepacia complex</taxon>
        <taxon>Burkholderia orbicola</taxon>
    </lineage>
</organism>
<name>NDK_BURO0</name>
<proteinExistence type="inferred from homology"/>
<evidence type="ECO:0000255" key="1">
    <source>
        <dbReference type="HAMAP-Rule" id="MF_00451"/>
    </source>
</evidence>
<protein>
    <recommendedName>
        <fullName evidence="1">Nucleoside diphosphate kinase</fullName>
        <shortName evidence="1">NDK</shortName>
        <shortName evidence="1">NDP kinase</shortName>
        <ecNumber evidence="1">2.7.4.6</ecNumber>
    </recommendedName>
    <alternativeName>
        <fullName evidence="1">Nucleoside-2-P kinase</fullName>
    </alternativeName>
</protein>
<gene>
    <name evidence="1" type="primary">ndk</name>
    <name type="ordered locus">Bcenmc03_1839</name>
</gene>
<reference key="1">
    <citation type="submission" date="2008-02" db="EMBL/GenBank/DDBJ databases">
        <title>Complete sequence of chromosome 1 of Burkholderia cenocepacia MC0-3.</title>
        <authorList>
            <person name="Copeland A."/>
            <person name="Lucas S."/>
            <person name="Lapidus A."/>
            <person name="Barry K."/>
            <person name="Bruce D."/>
            <person name="Goodwin L."/>
            <person name="Glavina del Rio T."/>
            <person name="Dalin E."/>
            <person name="Tice H."/>
            <person name="Pitluck S."/>
            <person name="Chain P."/>
            <person name="Malfatti S."/>
            <person name="Shin M."/>
            <person name="Vergez L."/>
            <person name="Schmutz J."/>
            <person name="Larimer F."/>
            <person name="Land M."/>
            <person name="Hauser L."/>
            <person name="Kyrpides N."/>
            <person name="Mikhailova N."/>
            <person name="Tiedje J."/>
            <person name="Richardson P."/>
        </authorList>
    </citation>
    <scope>NUCLEOTIDE SEQUENCE [LARGE SCALE GENOMIC DNA]</scope>
    <source>
        <strain>MC0-3</strain>
    </source>
</reference>